<feature type="chain" id="PRO_0000295626" description="Endoplasmic reticulum membrane-associated RNA degradation protein">
    <location>
        <begin position="1"/>
        <end position="678"/>
    </location>
</feature>
<feature type="transmembrane region" description="Helical" evidence="1">
    <location>
        <begin position="390"/>
        <end position="410"/>
    </location>
</feature>
<feature type="transmembrane region" description="Helical" evidence="1">
    <location>
        <begin position="587"/>
        <end position="607"/>
    </location>
</feature>
<feature type="splice variant" id="VSP_053708" description="In isoform 4." evidence="4">
    <location>
        <begin position="1"/>
        <end position="126"/>
    </location>
</feature>
<feature type="splice variant" id="VSP_026951" description="In isoform 2." evidence="5">
    <location>
        <begin position="508"/>
        <end position="580"/>
    </location>
</feature>
<feature type="splice variant" id="VSP_026952" description="In isoform 3." evidence="4">
    <original>WPQLLRELCSTPVPTLFCPRIVLEVLVVLRSISEQCRRVSSQVTVASELRHRQWVERTLRSRQRQNYLRMWS</original>
    <variation>PTSDTPLALAPRKPQPCRCRRRVRP</variation>
    <location>
        <begin position="508"/>
        <end position="579"/>
    </location>
</feature>
<feature type="sequence variant" id="VAR_070433" description="In PVNH6; may decrease protein stability; dbSNP:rs398122410." evidence="3">
    <original>I</original>
    <variation>N</variation>
    <location>
        <position position="377"/>
    </location>
</feature>
<feature type="sequence variant" id="VAR_033300" description="In dbSNP:rs4716346." evidence="2">
    <original>S</original>
    <variation>G</variation>
    <location>
        <position position="540"/>
    </location>
</feature>
<feature type="sequence conflict" description="In Ref. 1; BAA92035." evidence="6" ref="1">
    <original>E</original>
    <variation>G</variation>
    <location>
        <position position="276"/>
    </location>
</feature>
<name>EMARD_HUMAN</name>
<reference key="1">
    <citation type="journal article" date="2004" name="Nat. Genet.">
        <title>Complete sequencing and characterization of 21,243 full-length human cDNAs.</title>
        <authorList>
            <person name="Ota T."/>
            <person name="Suzuki Y."/>
            <person name="Nishikawa T."/>
            <person name="Otsuki T."/>
            <person name="Sugiyama T."/>
            <person name="Irie R."/>
            <person name="Wakamatsu A."/>
            <person name="Hayashi K."/>
            <person name="Sato H."/>
            <person name="Nagai K."/>
            <person name="Kimura K."/>
            <person name="Makita H."/>
            <person name="Sekine M."/>
            <person name="Obayashi M."/>
            <person name="Nishi T."/>
            <person name="Shibahara T."/>
            <person name="Tanaka T."/>
            <person name="Ishii S."/>
            <person name="Yamamoto J."/>
            <person name="Saito K."/>
            <person name="Kawai Y."/>
            <person name="Isono Y."/>
            <person name="Nakamura Y."/>
            <person name="Nagahari K."/>
            <person name="Murakami K."/>
            <person name="Yasuda T."/>
            <person name="Iwayanagi T."/>
            <person name="Wagatsuma M."/>
            <person name="Shiratori A."/>
            <person name="Sudo H."/>
            <person name="Hosoiri T."/>
            <person name="Kaku Y."/>
            <person name="Kodaira H."/>
            <person name="Kondo H."/>
            <person name="Sugawara M."/>
            <person name="Takahashi M."/>
            <person name="Kanda K."/>
            <person name="Yokoi T."/>
            <person name="Furuya T."/>
            <person name="Kikkawa E."/>
            <person name="Omura Y."/>
            <person name="Abe K."/>
            <person name="Kamihara K."/>
            <person name="Katsuta N."/>
            <person name="Sato K."/>
            <person name="Tanikawa M."/>
            <person name="Yamazaki M."/>
            <person name="Ninomiya K."/>
            <person name="Ishibashi T."/>
            <person name="Yamashita H."/>
            <person name="Murakawa K."/>
            <person name="Fujimori K."/>
            <person name="Tanai H."/>
            <person name="Kimata M."/>
            <person name="Watanabe M."/>
            <person name="Hiraoka S."/>
            <person name="Chiba Y."/>
            <person name="Ishida S."/>
            <person name="Ono Y."/>
            <person name="Takiguchi S."/>
            <person name="Watanabe S."/>
            <person name="Yosida M."/>
            <person name="Hotuta T."/>
            <person name="Kusano J."/>
            <person name="Kanehori K."/>
            <person name="Takahashi-Fujii A."/>
            <person name="Hara H."/>
            <person name="Tanase T.-O."/>
            <person name="Nomura Y."/>
            <person name="Togiya S."/>
            <person name="Komai F."/>
            <person name="Hara R."/>
            <person name="Takeuchi K."/>
            <person name="Arita M."/>
            <person name="Imose N."/>
            <person name="Musashino K."/>
            <person name="Yuuki H."/>
            <person name="Oshima A."/>
            <person name="Sasaki N."/>
            <person name="Aotsuka S."/>
            <person name="Yoshikawa Y."/>
            <person name="Matsunawa H."/>
            <person name="Ichihara T."/>
            <person name="Shiohata N."/>
            <person name="Sano S."/>
            <person name="Moriya S."/>
            <person name="Momiyama H."/>
            <person name="Satoh N."/>
            <person name="Takami S."/>
            <person name="Terashima Y."/>
            <person name="Suzuki O."/>
            <person name="Nakagawa S."/>
            <person name="Senoh A."/>
            <person name="Mizoguchi H."/>
            <person name="Goto Y."/>
            <person name="Shimizu F."/>
            <person name="Wakebe H."/>
            <person name="Hishigaki H."/>
            <person name="Watanabe T."/>
            <person name="Sugiyama A."/>
            <person name="Takemoto M."/>
            <person name="Kawakami B."/>
            <person name="Yamazaki M."/>
            <person name="Watanabe K."/>
            <person name="Kumagai A."/>
            <person name="Itakura S."/>
            <person name="Fukuzumi Y."/>
            <person name="Fujimori Y."/>
            <person name="Komiyama M."/>
            <person name="Tashiro H."/>
            <person name="Tanigami A."/>
            <person name="Fujiwara T."/>
            <person name="Ono T."/>
            <person name="Yamada K."/>
            <person name="Fujii Y."/>
            <person name="Ozaki K."/>
            <person name="Hirao M."/>
            <person name="Ohmori Y."/>
            <person name="Kawabata A."/>
            <person name="Hikiji T."/>
            <person name="Kobatake N."/>
            <person name="Inagaki H."/>
            <person name="Ikema Y."/>
            <person name="Okamoto S."/>
            <person name="Okitani R."/>
            <person name="Kawakami T."/>
            <person name="Noguchi S."/>
            <person name="Itoh T."/>
            <person name="Shigeta K."/>
            <person name="Senba T."/>
            <person name="Matsumura K."/>
            <person name="Nakajima Y."/>
            <person name="Mizuno T."/>
            <person name="Morinaga M."/>
            <person name="Sasaki M."/>
            <person name="Togashi T."/>
            <person name="Oyama M."/>
            <person name="Hata H."/>
            <person name="Watanabe M."/>
            <person name="Komatsu T."/>
            <person name="Mizushima-Sugano J."/>
            <person name="Satoh T."/>
            <person name="Shirai Y."/>
            <person name="Takahashi Y."/>
            <person name="Nakagawa K."/>
            <person name="Okumura K."/>
            <person name="Nagase T."/>
            <person name="Nomura N."/>
            <person name="Kikuchi H."/>
            <person name="Masuho Y."/>
            <person name="Yamashita R."/>
            <person name="Nakai K."/>
            <person name="Yada T."/>
            <person name="Nakamura Y."/>
            <person name="Ohara O."/>
            <person name="Isogai T."/>
            <person name="Sugano S."/>
        </authorList>
    </citation>
    <scope>NUCLEOTIDE SEQUENCE [LARGE SCALE MRNA] (ISOFORMS 1 AND 4)</scope>
    <scope>NUCLEOTIDE SEQUENCE [LARGE SCALE MRNA] OF 36-678 (ISOFORM 3)</scope>
    <scope>VARIANT GLY-540</scope>
    <source>
        <tissue>Brain cortex</tissue>
        <tissue>Placenta</tissue>
        <tissue>Teratocarcinoma</tissue>
    </source>
</reference>
<reference key="2">
    <citation type="journal article" date="2003" name="Nature">
        <title>The DNA sequence and analysis of human chromosome 6.</title>
        <authorList>
            <person name="Mungall A.J."/>
            <person name="Palmer S.A."/>
            <person name="Sims S.K."/>
            <person name="Edwards C.A."/>
            <person name="Ashurst J.L."/>
            <person name="Wilming L."/>
            <person name="Jones M.C."/>
            <person name="Horton R."/>
            <person name="Hunt S.E."/>
            <person name="Scott C.E."/>
            <person name="Gilbert J.G.R."/>
            <person name="Clamp M.E."/>
            <person name="Bethel G."/>
            <person name="Milne S."/>
            <person name="Ainscough R."/>
            <person name="Almeida J.P."/>
            <person name="Ambrose K.D."/>
            <person name="Andrews T.D."/>
            <person name="Ashwell R.I.S."/>
            <person name="Babbage A.K."/>
            <person name="Bagguley C.L."/>
            <person name="Bailey J."/>
            <person name="Banerjee R."/>
            <person name="Barker D.J."/>
            <person name="Barlow K.F."/>
            <person name="Bates K."/>
            <person name="Beare D.M."/>
            <person name="Beasley H."/>
            <person name="Beasley O."/>
            <person name="Bird C.P."/>
            <person name="Blakey S.E."/>
            <person name="Bray-Allen S."/>
            <person name="Brook J."/>
            <person name="Brown A.J."/>
            <person name="Brown J.Y."/>
            <person name="Burford D.C."/>
            <person name="Burrill W."/>
            <person name="Burton J."/>
            <person name="Carder C."/>
            <person name="Carter N.P."/>
            <person name="Chapman J.C."/>
            <person name="Clark S.Y."/>
            <person name="Clark G."/>
            <person name="Clee C.M."/>
            <person name="Clegg S."/>
            <person name="Cobley V."/>
            <person name="Collier R.E."/>
            <person name="Collins J.E."/>
            <person name="Colman L.K."/>
            <person name="Corby N.R."/>
            <person name="Coville G.J."/>
            <person name="Culley K.M."/>
            <person name="Dhami P."/>
            <person name="Davies J."/>
            <person name="Dunn M."/>
            <person name="Earthrowl M.E."/>
            <person name="Ellington A.E."/>
            <person name="Evans K.A."/>
            <person name="Faulkner L."/>
            <person name="Francis M.D."/>
            <person name="Frankish A."/>
            <person name="Frankland J."/>
            <person name="French L."/>
            <person name="Garner P."/>
            <person name="Garnett J."/>
            <person name="Ghori M.J."/>
            <person name="Gilby L.M."/>
            <person name="Gillson C.J."/>
            <person name="Glithero R.J."/>
            <person name="Grafham D.V."/>
            <person name="Grant M."/>
            <person name="Gribble S."/>
            <person name="Griffiths C."/>
            <person name="Griffiths M.N.D."/>
            <person name="Hall R."/>
            <person name="Halls K.S."/>
            <person name="Hammond S."/>
            <person name="Harley J.L."/>
            <person name="Hart E.A."/>
            <person name="Heath P.D."/>
            <person name="Heathcott R."/>
            <person name="Holmes S.J."/>
            <person name="Howden P.J."/>
            <person name="Howe K.L."/>
            <person name="Howell G.R."/>
            <person name="Huckle E."/>
            <person name="Humphray S.J."/>
            <person name="Humphries M.D."/>
            <person name="Hunt A.R."/>
            <person name="Johnson C.M."/>
            <person name="Joy A.A."/>
            <person name="Kay M."/>
            <person name="Keenan S.J."/>
            <person name="Kimberley A.M."/>
            <person name="King A."/>
            <person name="Laird G.K."/>
            <person name="Langford C."/>
            <person name="Lawlor S."/>
            <person name="Leongamornlert D.A."/>
            <person name="Leversha M."/>
            <person name="Lloyd C.R."/>
            <person name="Lloyd D.M."/>
            <person name="Loveland J.E."/>
            <person name="Lovell J."/>
            <person name="Martin S."/>
            <person name="Mashreghi-Mohammadi M."/>
            <person name="Maslen G.L."/>
            <person name="Matthews L."/>
            <person name="McCann O.T."/>
            <person name="McLaren S.J."/>
            <person name="McLay K."/>
            <person name="McMurray A."/>
            <person name="Moore M.J.F."/>
            <person name="Mullikin J.C."/>
            <person name="Niblett D."/>
            <person name="Nickerson T."/>
            <person name="Novik K.L."/>
            <person name="Oliver K."/>
            <person name="Overton-Larty E.K."/>
            <person name="Parker A."/>
            <person name="Patel R."/>
            <person name="Pearce A.V."/>
            <person name="Peck A.I."/>
            <person name="Phillimore B.J.C.T."/>
            <person name="Phillips S."/>
            <person name="Plumb R.W."/>
            <person name="Porter K.M."/>
            <person name="Ramsey Y."/>
            <person name="Ranby S.A."/>
            <person name="Rice C.M."/>
            <person name="Ross M.T."/>
            <person name="Searle S.M."/>
            <person name="Sehra H.K."/>
            <person name="Sheridan E."/>
            <person name="Skuce C.D."/>
            <person name="Smith S."/>
            <person name="Smith M."/>
            <person name="Spraggon L."/>
            <person name="Squares S.L."/>
            <person name="Steward C.A."/>
            <person name="Sycamore N."/>
            <person name="Tamlyn-Hall G."/>
            <person name="Tester J."/>
            <person name="Theaker A.J."/>
            <person name="Thomas D.W."/>
            <person name="Thorpe A."/>
            <person name="Tracey A."/>
            <person name="Tromans A."/>
            <person name="Tubby B."/>
            <person name="Wall M."/>
            <person name="Wallis J.M."/>
            <person name="West A.P."/>
            <person name="White S.S."/>
            <person name="Whitehead S.L."/>
            <person name="Whittaker H."/>
            <person name="Wild A."/>
            <person name="Willey D.J."/>
            <person name="Wilmer T.E."/>
            <person name="Wood J.M."/>
            <person name="Wray P.W."/>
            <person name="Wyatt J.C."/>
            <person name="Young L."/>
            <person name="Younger R.M."/>
            <person name="Bentley D.R."/>
            <person name="Coulson A."/>
            <person name="Durbin R.M."/>
            <person name="Hubbard T."/>
            <person name="Sulston J.E."/>
            <person name="Dunham I."/>
            <person name="Rogers J."/>
            <person name="Beck S."/>
        </authorList>
    </citation>
    <scope>NUCLEOTIDE SEQUENCE [LARGE SCALE GENOMIC DNA]</scope>
</reference>
<reference key="3">
    <citation type="journal article" date="2004" name="Genome Res.">
        <title>The status, quality, and expansion of the NIH full-length cDNA project: the Mammalian Gene Collection (MGC).</title>
        <authorList>
            <consortium name="The MGC Project Team"/>
        </authorList>
    </citation>
    <scope>NUCLEOTIDE SEQUENCE [LARGE SCALE MRNA] (ISOFORM 2)</scope>
    <source>
        <tissue>Testis</tissue>
    </source>
</reference>
<reference key="4">
    <citation type="journal article" date="2013" name="Brain">
        <title>Periventricular heterotopia in 6q terminal deletion syndrome: role of the C6orf70 gene.</title>
        <authorList>
            <person name="Conti V."/>
            <person name="Carabalona A."/>
            <person name="Pallesi-Pocachard E."/>
            <person name="Parrini E."/>
            <person name="Leventer R.J."/>
            <person name="Buhler E."/>
            <person name="McGillivray G."/>
            <person name="Michel F.J."/>
            <person name="Striano P."/>
            <person name="Mei D."/>
            <person name="Watrin F."/>
            <person name="Lise S."/>
            <person name="Pagnamenta A.T."/>
            <person name="Taylor J.C."/>
            <person name="Kini U."/>
            <person name="Clayton-Smith J."/>
            <person name="Novara F."/>
            <person name="Zuffardi O."/>
            <person name="Dobyns W.B."/>
            <person name="Scheffer I.E."/>
            <person name="Robertson S.P."/>
            <person name="Berkovic S.F."/>
            <person name="Represa A."/>
            <person name="Keays D.A."/>
            <person name="Cardoso C."/>
            <person name="Guerrini R."/>
        </authorList>
    </citation>
    <scope>VARIANT PVNH6 ASN-377</scope>
    <scope>FUNCTION</scope>
    <scope>SUBCELLULAR LOCATION</scope>
</reference>
<evidence type="ECO:0000255" key="1"/>
<evidence type="ECO:0000269" key="2">
    <source>
    </source>
</evidence>
<evidence type="ECO:0000269" key="3">
    <source>
    </source>
</evidence>
<evidence type="ECO:0000303" key="4">
    <source>
    </source>
</evidence>
<evidence type="ECO:0000303" key="5">
    <source>
    </source>
</evidence>
<evidence type="ECO:0000305" key="6"/>
<comment type="function">
    <text evidence="3">May play a role in neuronal migration during embryonic development.</text>
</comment>
<comment type="subcellular location">
    <subcellularLocation>
        <location evidence="3">Endoplasmic reticulum membrane</location>
        <topology evidence="3">Multi-pass membrane protein</topology>
    </subcellularLocation>
</comment>
<comment type="alternative products">
    <event type="alternative splicing"/>
    <isoform>
        <id>Q5T6L9-1</id>
        <name>1</name>
        <sequence type="displayed"/>
    </isoform>
    <isoform>
        <id>Q5T6L9-2</id>
        <name>2</name>
        <sequence type="described" ref="VSP_026951"/>
    </isoform>
    <isoform>
        <id>Q5T6L9-3</id>
        <name>3</name>
        <sequence type="described" ref="VSP_026952"/>
    </isoform>
    <isoform>
        <id>Q5T6L9-4</id>
        <name>4</name>
        <sequence type="described" ref="VSP_053708"/>
    </isoform>
</comment>
<comment type="disease" evidence="3">
    <disease id="DI-03958">
        <name>Periventricular nodular heterotopia 6</name>
        <acronym>PVNH6</acronym>
        <description>A form of periventricular nodular heterotopia, a disorder resulting from a defect in the pattern of neuronal migration in which ectopic collections of neurons lie along the lateral ventricles of the brain or just beneath, contiguously or in isolated patches. PVNH6 results in delayed psychomotor development, delayed speech, strabismus, and onset of seizures with hypsarrhythmia in early infancy.</description>
        <dbReference type="MIM" id="615544"/>
    </disease>
    <text>The disease is caused by variants affecting the gene represented in this entry.</text>
</comment>
<comment type="sequence caution" evidence="6">
    <conflict type="erroneous termination">
        <sequence resource="EMBL-CDS" id="AAH44812"/>
    </conflict>
    <text>Extended C-terminus.</text>
</comment>
<comment type="sequence caution" evidence="6">
    <conflict type="erroneous initiation">
        <sequence resource="EMBL-CDS" id="BAA91653"/>
    </conflict>
    <text>Truncated N-terminus.</text>
</comment>
<gene>
    <name type="primary">ERMARD</name>
    <name type="synonym">C6orf70</name>
</gene>
<dbReference type="EMBL" id="AK001369">
    <property type="protein sequence ID" value="BAA91653.1"/>
    <property type="status" value="ALT_INIT"/>
    <property type="molecule type" value="mRNA"/>
</dbReference>
<dbReference type="EMBL" id="AK002014">
    <property type="protein sequence ID" value="BAA92035.1"/>
    <property type="molecule type" value="mRNA"/>
</dbReference>
<dbReference type="EMBL" id="AK294090">
    <property type="protein sequence ID" value="BAG57431.1"/>
    <property type="molecule type" value="mRNA"/>
</dbReference>
<dbReference type="EMBL" id="AL354892">
    <property type="status" value="NOT_ANNOTATED_CDS"/>
    <property type="molecule type" value="Genomic_DNA"/>
</dbReference>
<dbReference type="EMBL" id="BC044812">
    <property type="protein sequence ID" value="AAH44812.1"/>
    <property type="status" value="ALT_SEQ"/>
    <property type="molecule type" value="mRNA"/>
</dbReference>
<dbReference type="CCDS" id="CCDS34576.1">
    <molecule id="Q5T6L9-1"/>
</dbReference>
<dbReference type="CCDS" id="CCDS64572.1">
    <molecule id="Q5T6L9-3"/>
</dbReference>
<dbReference type="CCDS" id="CCDS64573.1">
    <molecule id="Q5T6L9-2"/>
</dbReference>
<dbReference type="CCDS" id="CCDS64574.1">
    <molecule id="Q5T6L9-4"/>
</dbReference>
<dbReference type="RefSeq" id="NP_001265460.1">
    <molecule id="Q5T6L9-3"/>
    <property type="nucleotide sequence ID" value="NM_001278531.2"/>
</dbReference>
<dbReference type="RefSeq" id="NP_001265461.1">
    <molecule id="Q5T6L9-4"/>
    <property type="nucleotide sequence ID" value="NM_001278532.2"/>
</dbReference>
<dbReference type="RefSeq" id="NP_001265462.1">
    <molecule id="Q5T6L9-2"/>
    <property type="nucleotide sequence ID" value="NM_001278533.2"/>
</dbReference>
<dbReference type="RefSeq" id="NP_060811.1">
    <molecule id="Q5T6L9-1"/>
    <property type="nucleotide sequence ID" value="NM_018341.3"/>
</dbReference>
<dbReference type="RefSeq" id="XP_011534241.1">
    <property type="nucleotide sequence ID" value="XM_011535939.2"/>
</dbReference>
<dbReference type="RefSeq" id="XP_011534242.1">
    <molecule id="Q5T6L9-4"/>
    <property type="nucleotide sequence ID" value="XM_011535940.3"/>
</dbReference>
<dbReference type="RefSeq" id="XP_016866521.1">
    <property type="nucleotide sequence ID" value="XM_017011032.1"/>
</dbReference>
<dbReference type="RefSeq" id="XP_016866522.1">
    <property type="nucleotide sequence ID" value="XM_017011033.1"/>
</dbReference>
<dbReference type="RefSeq" id="XP_047274976.1">
    <molecule id="Q5T6L9-4"/>
    <property type="nucleotide sequence ID" value="XM_047419020.1"/>
</dbReference>
<dbReference type="RefSeq" id="XP_047274977.1">
    <molecule id="Q5T6L9-4"/>
    <property type="nucleotide sequence ID" value="XM_047419021.1"/>
</dbReference>
<dbReference type="RefSeq" id="XP_054184649.1">
    <molecule id="Q5T6L9-4"/>
    <property type="nucleotide sequence ID" value="XM_054328674.1"/>
</dbReference>
<dbReference type="RefSeq" id="XP_054184651.1">
    <molecule id="Q5T6L9-4"/>
    <property type="nucleotide sequence ID" value="XM_054328676.1"/>
</dbReference>
<dbReference type="RefSeq" id="XP_054184652.1">
    <molecule id="Q5T6L9-4"/>
    <property type="nucleotide sequence ID" value="XM_054328677.1"/>
</dbReference>
<dbReference type="RefSeq" id="XP_054184653.1">
    <molecule id="Q5T6L9-4"/>
    <property type="nucleotide sequence ID" value="XM_054328678.1"/>
</dbReference>
<dbReference type="SMR" id="Q5T6L9"/>
<dbReference type="BioGRID" id="120895">
    <property type="interactions" value="1"/>
</dbReference>
<dbReference type="FunCoup" id="Q5T6L9">
    <property type="interactions" value="1720"/>
</dbReference>
<dbReference type="STRING" id="9606.ENSP00000355735"/>
<dbReference type="iPTMnet" id="Q5T6L9"/>
<dbReference type="PhosphoSitePlus" id="Q5T6L9"/>
<dbReference type="BioMuta" id="ERMARD"/>
<dbReference type="DMDM" id="74745242"/>
<dbReference type="MassIVE" id="Q5T6L9"/>
<dbReference type="PaxDb" id="9606-ENSP00000355735"/>
<dbReference type="PeptideAtlas" id="Q5T6L9"/>
<dbReference type="ProteomicsDB" id="30484"/>
<dbReference type="ProteomicsDB" id="64597">
    <molecule id="Q5T6L9-1"/>
</dbReference>
<dbReference type="ProteomicsDB" id="64598">
    <molecule id="Q5T6L9-2"/>
</dbReference>
<dbReference type="ProteomicsDB" id="64599">
    <molecule id="Q5T6L9-3"/>
</dbReference>
<dbReference type="Antibodypedia" id="49588">
    <property type="antibodies" value="96 antibodies from 16 providers"/>
</dbReference>
<dbReference type="DNASU" id="55780"/>
<dbReference type="Ensembl" id="ENST00000366772.6">
    <molecule id="Q5T6L9-3"/>
    <property type="protein sequence ID" value="ENSP00000355734.1"/>
    <property type="gene ID" value="ENSG00000130023.16"/>
</dbReference>
<dbReference type="Ensembl" id="ENST00000366773.8">
    <molecule id="Q5T6L9-1"/>
    <property type="protein sequence ID" value="ENSP00000355735.3"/>
    <property type="gene ID" value="ENSG00000130023.16"/>
</dbReference>
<dbReference type="Ensembl" id="ENST00000392095.8">
    <molecule id="Q5T6L9-4"/>
    <property type="protein sequence ID" value="ENSP00000375945.4"/>
    <property type="gene ID" value="ENSG00000130023.16"/>
</dbReference>
<dbReference type="Ensembl" id="ENST00000418781.7">
    <molecule id="Q5T6L9-2"/>
    <property type="protein sequence ID" value="ENSP00000397661.2"/>
    <property type="gene ID" value="ENSG00000130023.16"/>
</dbReference>
<dbReference type="Ensembl" id="ENST00000611694.3">
    <molecule id="Q5T6L9-2"/>
    <property type="protein sequence ID" value="ENSP00000483849.2"/>
    <property type="gene ID" value="ENSG00000276187.4"/>
</dbReference>
<dbReference type="Ensembl" id="ENST00000615090.4">
    <molecule id="Q5T6L9-4"/>
    <property type="protein sequence ID" value="ENSP00000480327.1"/>
    <property type="gene ID" value="ENSG00000276187.4"/>
</dbReference>
<dbReference type="Ensembl" id="ENST00000616801.4">
    <molecule id="Q5T6L9-1"/>
    <property type="protein sequence ID" value="ENSP00000483960.2"/>
    <property type="gene ID" value="ENSG00000276187.4"/>
</dbReference>
<dbReference type="Ensembl" id="ENST00000621205.4">
    <molecule id="Q5T6L9-3"/>
    <property type="protein sequence ID" value="ENSP00000483666.2"/>
    <property type="gene ID" value="ENSG00000276187.4"/>
</dbReference>
<dbReference type="GeneID" id="55780"/>
<dbReference type="KEGG" id="hsa:55780"/>
<dbReference type="MANE-Select" id="ENST00000366773.8">
    <property type="protein sequence ID" value="ENSP00000355735.3"/>
    <property type="RefSeq nucleotide sequence ID" value="NM_018341.3"/>
    <property type="RefSeq protein sequence ID" value="NP_060811.1"/>
</dbReference>
<dbReference type="UCSC" id="uc003qxg.3">
    <molecule id="Q5T6L9-1"/>
    <property type="organism name" value="human"/>
</dbReference>
<dbReference type="AGR" id="HGNC:21056"/>
<dbReference type="CTD" id="55780"/>
<dbReference type="DisGeNET" id="55780"/>
<dbReference type="GeneCards" id="ERMARD"/>
<dbReference type="HGNC" id="HGNC:21056">
    <property type="gene designation" value="ERMARD"/>
</dbReference>
<dbReference type="HPA" id="ENSG00000130023">
    <property type="expression patterns" value="Low tissue specificity"/>
</dbReference>
<dbReference type="MalaCards" id="ERMARD"/>
<dbReference type="MIM" id="615532">
    <property type="type" value="gene"/>
</dbReference>
<dbReference type="MIM" id="615544">
    <property type="type" value="phenotype"/>
</dbReference>
<dbReference type="neXtProt" id="NX_Q5T6L9"/>
<dbReference type="OpenTargets" id="ENSG00000130023"/>
<dbReference type="Orphanet" id="75857">
    <property type="disease" value="6q terminal deletion syndrome"/>
</dbReference>
<dbReference type="Orphanet" id="98892">
    <property type="disease" value="Periventricular nodular heterotopia"/>
</dbReference>
<dbReference type="PharmGKB" id="PA134884522"/>
<dbReference type="VEuPathDB" id="HostDB:ENSG00000130023"/>
<dbReference type="eggNOG" id="ENOG502QS21">
    <property type="taxonomic scope" value="Eukaryota"/>
</dbReference>
<dbReference type="GeneTree" id="ENSGT00390000001024"/>
<dbReference type="HOGENOM" id="CLU_026135_0_0_1"/>
<dbReference type="InParanoid" id="Q5T6L9"/>
<dbReference type="OMA" id="QRGEVCW"/>
<dbReference type="OrthoDB" id="49386at2759"/>
<dbReference type="PAN-GO" id="Q5T6L9">
    <property type="GO annotations" value="0 GO annotations based on evolutionary models"/>
</dbReference>
<dbReference type="PhylomeDB" id="Q5T6L9"/>
<dbReference type="TreeFam" id="TF329504"/>
<dbReference type="PathwayCommons" id="Q5T6L9"/>
<dbReference type="BioGRID-ORCS" id="55780">
    <property type="hits" value="8 hits in 1140 CRISPR screens"/>
</dbReference>
<dbReference type="ChiTaRS" id="ERMARD">
    <property type="organism name" value="human"/>
</dbReference>
<dbReference type="GenomeRNAi" id="55780"/>
<dbReference type="Pharos" id="Q5T6L9">
    <property type="development level" value="Tdark"/>
</dbReference>
<dbReference type="PRO" id="PR:Q5T6L9"/>
<dbReference type="Proteomes" id="UP000005640">
    <property type="component" value="Chromosome 6"/>
</dbReference>
<dbReference type="RNAct" id="Q5T6L9">
    <property type="molecule type" value="protein"/>
</dbReference>
<dbReference type="Bgee" id="ENSG00000130023">
    <property type="expression patterns" value="Expressed in right uterine tube and 98 other cell types or tissues"/>
</dbReference>
<dbReference type="ExpressionAtlas" id="Q5T6L9">
    <property type="expression patterns" value="baseline and differential"/>
</dbReference>
<dbReference type="GO" id="GO:0005789">
    <property type="term" value="C:endoplasmic reticulum membrane"/>
    <property type="evidence" value="ECO:0007669"/>
    <property type="project" value="UniProtKB-SubCell"/>
</dbReference>
<dbReference type="InterPro" id="IPR025209">
    <property type="entry name" value="DUF4209"/>
</dbReference>
<dbReference type="InterPro" id="IPR039635">
    <property type="entry name" value="ERMARD"/>
</dbReference>
<dbReference type="PANTHER" id="PTHR31701">
    <property type="entry name" value="ENDOPLASMIC RETICULUM MEMBRANE-ASSOCIATED RNA DEGRADATION PROTEIN"/>
    <property type="match status" value="1"/>
</dbReference>
<dbReference type="PANTHER" id="PTHR31701:SF2">
    <property type="entry name" value="ENDOPLASMIC RETICULUM MEMBRANE-ASSOCIATED RNA DEGRADATION PROTEIN"/>
    <property type="match status" value="1"/>
</dbReference>
<dbReference type="Pfam" id="PF13910">
    <property type="entry name" value="DUF4209"/>
    <property type="match status" value="1"/>
</dbReference>
<proteinExistence type="evidence at protein level"/>
<accession>Q5T6L9</accession>
<accession>B4DFH0</accession>
<accession>F8WAF1</accession>
<accession>Q3ZCS8</accession>
<accession>Q5T6L8</accession>
<accession>Q9NUT5</accession>
<accession>Q9NVU2</accession>
<sequence>MEVLIGDPITTCLSPSVYDIICNLGFQLRENCDINSIVTQNGEVCWKTITDCVSYTESEQGLDYWGSVRLLGPVCEAVHSHFLSLTKGQFEIRYAPWFQWTSFPELFPEIFDALESLQSPAISLSLMKLTSCLERALGDVFLLIGKECPFLLRDLLSSEELAQVFSQSVMNVLKVFVGSPCGLNLRNVLWHGFASPEEIPPKYCSMMILLTAGLGQLLKSYLQNTKLTLAHRSFISLTNLEDLIVFPDVTYEVLSVLEEVMMKSAFILKIMLPYWEVALVKFKSHRFADCAILLLTQLETGLRNVFATLNRCPKRLLTAESTALYTTFDQILAKHLNDGKINQLPLFLGEPAMEFLWDFLNHQEGPRIRDHLSHGEINLHEFSKETTNQLLAFSLVLLLRFVDDCLLSVFKEKSAVELLISLAEGYSSRCHPVFQLKKQVLSCEESIRVWALLPFPEELTRQAVRLEDNSETNACHSLITKMTDELYHHMPENRCVLKDLDRLPTETWPQLLRELCSTPVPTLFCPRIVLEVLVVLRSISEQCRRVSSQVTVASELRHRQWVERTLRSRQRQNYLRMWSSIRLLSPVLSLILLLIALELVNIHAVCGKNAHEYQQYLKFVKSILQYTENLVAYTSYEKNKWNETINLTHTALLKMWTFSEKKQMLIHLAKKSTSKVLL</sequence>
<organism>
    <name type="scientific">Homo sapiens</name>
    <name type="common">Human</name>
    <dbReference type="NCBI Taxonomy" id="9606"/>
    <lineage>
        <taxon>Eukaryota</taxon>
        <taxon>Metazoa</taxon>
        <taxon>Chordata</taxon>
        <taxon>Craniata</taxon>
        <taxon>Vertebrata</taxon>
        <taxon>Euteleostomi</taxon>
        <taxon>Mammalia</taxon>
        <taxon>Eutheria</taxon>
        <taxon>Euarchontoglires</taxon>
        <taxon>Primates</taxon>
        <taxon>Haplorrhini</taxon>
        <taxon>Catarrhini</taxon>
        <taxon>Hominidae</taxon>
        <taxon>Homo</taxon>
    </lineage>
</organism>
<keyword id="KW-0025">Alternative splicing</keyword>
<keyword id="KW-0217">Developmental protein</keyword>
<keyword id="KW-0225">Disease variant</keyword>
<keyword id="KW-0256">Endoplasmic reticulum</keyword>
<keyword id="KW-0472">Membrane</keyword>
<keyword id="KW-1267">Proteomics identification</keyword>
<keyword id="KW-1185">Reference proteome</keyword>
<keyword id="KW-0812">Transmembrane</keyword>
<keyword id="KW-1133">Transmembrane helix</keyword>
<protein>
    <recommendedName>
        <fullName>Endoplasmic reticulum membrane-associated RNA degradation protein</fullName>
        <shortName>ER membrane-associated RNA degradation protein</shortName>
    </recommendedName>
</protein>